<comment type="function">
    <text evidence="1">One of the essential components for the initiation of protein synthesis. Stabilizes the binding of IF-2 and IF-3 on the 30S subunit to which N-formylmethionyl-tRNA(fMet) subsequently binds. Helps modulate mRNA selection, yielding the 30S pre-initiation complex (PIC). Upon addition of the 50S ribosomal subunit IF-1, IF-2 and IF-3 are released leaving the mature 70S translation initiation complex.</text>
</comment>
<comment type="subunit">
    <text evidence="1">Component of the 30S ribosomal translation pre-initiation complex which assembles on the 30S ribosome in the order IF-2 and IF-3, IF-1 and N-formylmethionyl-tRNA(fMet); mRNA recruitment can occur at any time during PIC assembly.</text>
</comment>
<comment type="subcellular location">
    <subcellularLocation>
        <location evidence="1">Cytoplasm</location>
    </subcellularLocation>
</comment>
<comment type="similarity">
    <text evidence="1">Belongs to the IF-1 family.</text>
</comment>
<name>IF1_CAMHC</name>
<evidence type="ECO:0000255" key="1">
    <source>
        <dbReference type="HAMAP-Rule" id="MF_00075"/>
    </source>
</evidence>
<keyword id="KW-0963">Cytoplasm</keyword>
<keyword id="KW-0396">Initiation factor</keyword>
<keyword id="KW-0648">Protein biosynthesis</keyword>
<keyword id="KW-1185">Reference proteome</keyword>
<keyword id="KW-0694">RNA-binding</keyword>
<keyword id="KW-0699">rRNA-binding</keyword>
<protein>
    <recommendedName>
        <fullName evidence="1">Translation initiation factor IF-1</fullName>
    </recommendedName>
</protein>
<proteinExistence type="inferred from homology"/>
<sequence>MSKDDVIEIDGNVIEALPNATFKVELDNKHVILCHIAGKMRMHYIKIMPGDRVKVELTPYSLDKGRITYRYK</sequence>
<dbReference type="EMBL" id="CP000776">
    <property type="protein sequence ID" value="ABS51231.1"/>
    <property type="molecule type" value="Genomic_DNA"/>
</dbReference>
<dbReference type="RefSeq" id="WP_012108097.1">
    <property type="nucleotide sequence ID" value="NC_009714.1"/>
</dbReference>
<dbReference type="SMR" id="A7HZX5"/>
<dbReference type="STRING" id="360107.CHAB381_0209"/>
<dbReference type="KEGG" id="cha:CHAB381_0209"/>
<dbReference type="eggNOG" id="COG0361">
    <property type="taxonomic scope" value="Bacteria"/>
</dbReference>
<dbReference type="HOGENOM" id="CLU_151267_1_0_7"/>
<dbReference type="OrthoDB" id="9803250at2"/>
<dbReference type="Proteomes" id="UP000002407">
    <property type="component" value="Chromosome"/>
</dbReference>
<dbReference type="GO" id="GO:0005829">
    <property type="term" value="C:cytosol"/>
    <property type="evidence" value="ECO:0007669"/>
    <property type="project" value="TreeGrafter"/>
</dbReference>
<dbReference type="GO" id="GO:0043022">
    <property type="term" value="F:ribosome binding"/>
    <property type="evidence" value="ECO:0007669"/>
    <property type="project" value="UniProtKB-UniRule"/>
</dbReference>
<dbReference type="GO" id="GO:0019843">
    <property type="term" value="F:rRNA binding"/>
    <property type="evidence" value="ECO:0007669"/>
    <property type="project" value="UniProtKB-UniRule"/>
</dbReference>
<dbReference type="GO" id="GO:0003743">
    <property type="term" value="F:translation initiation factor activity"/>
    <property type="evidence" value="ECO:0007669"/>
    <property type="project" value="UniProtKB-UniRule"/>
</dbReference>
<dbReference type="CDD" id="cd04451">
    <property type="entry name" value="S1_IF1"/>
    <property type="match status" value="1"/>
</dbReference>
<dbReference type="FunFam" id="2.40.50.140:FF:000002">
    <property type="entry name" value="Translation initiation factor IF-1"/>
    <property type="match status" value="1"/>
</dbReference>
<dbReference type="Gene3D" id="2.40.50.140">
    <property type="entry name" value="Nucleic acid-binding proteins"/>
    <property type="match status" value="1"/>
</dbReference>
<dbReference type="HAMAP" id="MF_00075">
    <property type="entry name" value="IF_1"/>
    <property type="match status" value="1"/>
</dbReference>
<dbReference type="InterPro" id="IPR012340">
    <property type="entry name" value="NA-bd_OB-fold"/>
</dbReference>
<dbReference type="InterPro" id="IPR006196">
    <property type="entry name" value="RNA-binding_domain_S1_IF1"/>
</dbReference>
<dbReference type="InterPro" id="IPR004368">
    <property type="entry name" value="TIF_IF1"/>
</dbReference>
<dbReference type="NCBIfam" id="TIGR00008">
    <property type="entry name" value="infA"/>
    <property type="match status" value="1"/>
</dbReference>
<dbReference type="PANTHER" id="PTHR33370">
    <property type="entry name" value="TRANSLATION INITIATION FACTOR IF-1, CHLOROPLASTIC"/>
    <property type="match status" value="1"/>
</dbReference>
<dbReference type="PANTHER" id="PTHR33370:SF1">
    <property type="entry name" value="TRANSLATION INITIATION FACTOR IF-1, CHLOROPLASTIC"/>
    <property type="match status" value="1"/>
</dbReference>
<dbReference type="Pfam" id="PF01176">
    <property type="entry name" value="eIF-1a"/>
    <property type="match status" value="1"/>
</dbReference>
<dbReference type="SUPFAM" id="SSF50249">
    <property type="entry name" value="Nucleic acid-binding proteins"/>
    <property type="match status" value="1"/>
</dbReference>
<dbReference type="PROSITE" id="PS50832">
    <property type="entry name" value="S1_IF1_TYPE"/>
    <property type="match status" value="1"/>
</dbReference>
<gene>
    <name evidence="1" type="primary">infA</name>
    <name type="ordered locus">CHAB381_0209</name>
</gene>
<accession>A7HZX5</accession>
<feature type="chain" id="PRO_0000338793" description="Translation initiation factor IF-1">
    <location>
        <begin position="1"/>
        <end position="72"/>
    </location>
</feature>
<feature type="domain" description="S1-like" evidence="1">
    <location>
        <begin position="1"/>
        <end position="72"/>
    </location>
</feature>
<organism>
    <name type="scientific">Campylobacter hominis (strain ATCC BAA-381 / DSM 21671 / CCUG 45161 / LMG 19568 / NCTC 13146 / CH001A)</name>
    <dbReference type="NCBI Taxonomy" id="360107"/>
    <lineage>
        <taxon>Bacteria</taxon>
        <taxon>Pseudomonadati</taxon>
        <taxon>Campylobacterota</taxon>
        <taxon>Epsilonproteobacteria</taxon>
        <taxon>Campylobacterales</taxon>
        <taxon>Campylobacteraceae</taxon>
        <taxon>Campylobacter</taxon>
    </lineage>
</organism>
<reference key="1">
    <citation type="submission" date="2007-07" db="EMBL/GenBank/DDBJ databases">
        <title>Complete genome sequence of Campylobacter hominis ATCC BAA-381, a commensal isolated from the human gastrointestinal tract.</title>
        <authorList>
            <person name="Fouts D.E."/>
            <person name="Mongodin E.F."/>
            <person name="Puiu D."/>
            <person name="Sebastian Y."/>
            <person name="Miller W.G."/>
            <person name="Mandrell R.E."/>
            <person name="Nelson K.E."/>
        </authorList>
    </citation>
    <scope>NUCLEOTIDE SEQUENCE [LARGE SCALE GENOMIC DNA]</scope>
    <source>
        <strain>ATCC BAA-381 / DSM 21671 / CCUG 45161 / LMG 19568 / NCTC 13146 / CH001A</strain>
    </source>
</reference>